<evidence type="ECO:0000255" key="1"/>
<evidence type="ECO:0000256" key="2">
    <source>
        <dbReference type="SAM" id="MobiDB-lite"/>
    </source>
</evidence>
<evidence type="ECO:0000305" key="3"/>
<comment type="subcellular location">
    <subcellularLocation>
        <location evidence="3">Membrane</location>
        <topology evidence="3">Multi-pass membrane protein</topology>
    </subcellularLocation>
</comment>
<sequence length="219" mass="24099">MIINNQNSPQSINTPSSVSSRQHINKSKKKKENVIKRMLIRLSNSNNRSLATVFGVIGGLVLGIVLVCKEYENFPLVGKGLPLVYRIVGIFLSAGTGGNLSSYIGGTIDIITGDKTVVDLYKSFKRYFKKVKDKNHRSPIPLTNLNNNNNNNNNNNNNNNNNNNNNNNNNNNNNNNNNNNSGGSGSTDNNNNNNEPIFSNNNSNNNNDNNSDLEIPIPI</sequence>
<reference key="1">
    <citation type="journal article" date="2005" name="Nature">
        <title>The genome of the social amoeba Dictyostelium discoideum.</title>
        <authorList>
            <person name="Eichinger L."/>
            <person name="Pachebat J.A."/>
            <person name="Gloeckner G."/>
            <person name="Rajandream M.A."/>
            <person name="Sucgang R."/>
            <person name="Berriman M."/>
            <person name="Song J."/>
            <person name="Olsen R."/>
            <person name="Szafranski K."/>
            <person name="Xu Q."/>
            <person name="Tunggal B."/>
            <person name="Kummerfeld S."/>
            <person name="Madera M."/>
            <person name="Konfortov B.A."/>
            <person name="Rivero F."/>
            <person name="Bankier A.T."/>
            <person name="Lehmann R."/>
            <person name="Hamlin N."/>
            <person name="Davies R."/>
            <person name="Gaudet P."/>
            <person name="Fey P."/>
            <person name="Pilcher K."/>
            <person name="Chen G."/>
            <person name="Saunders D."/>
            <person name="Sodergren E.J."/>
            <person name="Davis P."/>
            <person name="Kerhornou A."/>
            <person name="Nie X."/>
            <person name="Hall N."/>
            <person name="Anjard C."/>
            <person name="Hemphill L."/>
            <person name="Bason N."/>
            <person name="Farbrother P."/>
            <person name="Desany B."/>
            <person name="Just E."/>
            <person name="Morio T."/>
            <person name="Rost R."/>
            <person name="Churcher C.M."/>
            <person name="Cooper J."/>
            <person name="Haydock S."/>
            <person name="van Driessche N."/>
            <person name="Cronin A."/>
            <person name="Goodhead I."/>
            <person name="Muzny D.M."/>
            <person name="Mourier T."/>
            <person name="Pain A."/>
            <person name="Lu M."/>
            <person name="Harper D."/>
            <person name="Lindsay R."/>
            <person name="Hauser H."/>
            <person name="James K.D."/>
            <person name="Quiles M."/>
            <person name="Madan Babu M."/>
            <person name="Saito T."/>
            <person name="Buchrieser C."/>
            <person name="Wardroper A."/>
            <person name="Felder M."/>
            <person name="Thangavelu M."/>
            <person name="Johnson D."/>
            <person name="Knights A."/>
            <person name="Loulseged H."/>
            <person name="Mungall K.L."/>
            <person name="Oliver K."/>
            <person name="Price C."/>
            <person name="Quail M.A."/>
            <person name="Urushihara H."/>
            <person name="Hernandez J."/>
            <person name="Rabbinowitsch E."/>
            <person name="Steffen D."/>
            <person name="Sanders M."/>
            <person name="Ma J."/>
            <person name="Kohara Y."/>
            <person name="Sharp S."/>
            <person name="Simmonds M.N."/>
            <person name="Spiegler S."/>
            <person name="Tivey A."/>
            <person name="Sugano S."/>
            <person name="White B."/>
            <person name="Walker D."/>
            <person name="Woodward J.R."/>
            <person name="Winckler T."/>
            <person name="Tanaka Y."/>
            <person name="Shaulsky G."/>
            <person name="Schleicher M."/>
            <person name="Weinstock G.M."/>
            <person name="Rosenthal A."/>
            <person name="Cox E.C."/>
            <person name="Chisholm R.L."/>
            <person name="Gibbs R.A."/>
            <person name="Loomis W.F."/>
            <person name="Platzer M."/>
            <person name="Kay R.R."/>
            <person name="Williams J.G."/>
            <person name="Dear P.H."/>
            <person name="Noegel A.A."/>
            <person name="Barrell B.G."/>
            <person name="Kuspa A."/>
        </authorList>
    </citation>
    <scope>NUCLEOTIDE SEQUENCE [LARGE SCALE GENOMIC DNA]</scope>
    <source>
        <strain>AX4</strain>
    </source>
</reference>
<organism>
    <name type="scientific">Dictyostelium discoideum</name>
    <name type="common">Social amoeba</name>
    <dbReference type="NCBI Taxonomy" id="44689"/>
    <lineage>
        <taxon>Eukaryota</taxon>
        <taxon>Amoebozoa</taxon>
        <taxon>Evosea</taxon>
        <taxon>Eumycetozoa</taxon>
        <taxon>Dictyostelia</taxon>
        <taxon>Dictyosteliales</taxon>
        <taxon>Dictyosteliaceae</taxon>
        <taxon>Dictyostelium</taxon>
    </lineage>
</organism>
<dbReference type="EMBL" id="AAFI02000074">
    <property type="protein sequence ID" value="EAL64880.1"/>
    <property type="molecule type" value="Genomic_DNA"/>
</dbReference>
<dbReference type="RefSeq" id="XP_639889.1">
    <property type="nucleotide sequence ID" value="XM_634797.1"/>
</dbReference>
<dbReference type="SMR" id="Q54NM7"/>
<dbReference type="FunCoup" id="Q54NM7">
    <property type="interactions" value="877"/>
</dbReference>
<dbReference type="PaxDb" id="44689-DDB0186364"/>
<dbReference type="EnsemblProtists" id="EAL64880">
    <property type="protein sequence ID" value="EAL64880"/>
    <property type="gene ID" value="DDB_G0285135"/>
</dbReference>
<dbReference type="GeneID" id="8624960"/>
<dbReference type="KEGG" id="ddi:DDB_G0285135"/>
<dbReference type="dictyBase" id="DDB_G0285135"/>
<dbReference type="VEuPathDB" id="AmoebaDB:DDB_G0285135"/>
<dbReference type="eggNOG" id="ENOG502RHMA">
    <property type="taxonomic scope" value="Eukaryota"/>
</dbReference>
<dbReference type="HOGENOM" id="CLU_1263552_0_0_1"/>
<dbReference type="InParanoid" id="Q54NM7"/>
<dbReference type="OMA" id="CKEYENF"/>
<dbReference type="PRO" id="PR:Q54NM7"/>
<dbReference type="Proteomes" id="UP000002195">
    <property type="component" value="Chromosome 4"/>
</dbReference>
<dbReference type="GO" id="GO:0016020">
    <property type="term" value="C:membrane"/>
    <property type="evidence" value="ECO:0007669"/>
    <property type="project" value="UniProtKB-SubCell"/>
</dbReference>
<dbReference type="PANTHER" id="PTHR16148:SF14">
    <property type="entry name" value="MYND-TYPE DOMAIN-CONTAINING PROTEIN"/>
    <property type="match status" value="1"/>
</dbReference>
<dbReference type="PANTHER" id="PTHR16148">
    <property type="entry name" value="NF-KAPPA-B-REPRESSING FACTOR-RELATED"/>
    <property type="match status" value="1"/>
</dbReference>
<proteinExistence type="predicted"/>
<feature type="chain" id="PRO_0000350795" description="Putative uncharacterized protein DDB_G0285135">
    <location>
        <begin position="1"/>
        <end position="219"/>
    </location>
</feature>
<feature type="transmembrane region" description="Helical" evidence="1">
    <location>
        <begin position="49"/>
        <end position="69"/>
    </location>
</feature>
<feature type="transmembrane region" description="Helical" evidence="1">
    <location>
        <begin position="83"/>
        <end position="105"/>
    </location>
</feature>
<feature type="region of interest" description="Disordered" evidence="2">
    <location>
        <begin position="1"/>
        <end position="31"/>
    </location>
</feature>
<feature type="region of interest" description="Disordered" evidence="2">
    <location>
        <begin position="135"/>
        <end position="219"/>
    </location>
</feature>
<feature type="compositionally biased region" description="Low complexity" evidence="2">
    <location>
        <begin position="1"/>
        <end position="17"/>
    </location>
</feature>
<feature type="compositionally biased region" description="Low complexity" evidence="2">
    <location>
        <begin position="144"/>
        <end position="212"/>
    </location>
</feature>
<accession>Q54NM7</accession>
<protein>
    <recommendedName>
        <fullName>Putative uncharacterized protein DDB_G0285135</fullName>
    </recommendedName>
</protein>
<name>Y6364_DICDI</name>
<keyword id="KW-0472">Membrane</keyword>
<keyword id="KW-1185">Reference proteome</keyword>
<keyword id="KW-0812">Transmembrane</keyword>
<keyword id="KW-1133">Transmembrane helix</keyword>
<gene>
    <name type="ORF">DDB_G0285135</name>
</gene>